<comment type="function">
    <text evidence="3 4 5 7">Component of the DREAM complex, a multiprotein complex that can both act as a transcription activator or repressor depending on the context. In follicle cells, the complex plays a central role in the site-specific DNA replication at the chorion loci. During development, the complex represses transcription of developmentally controlled E2F target genes.</text>
</comment>
<comment type="subunit">
    <text evidence="3 5 6">Component of the DREAM complex at least composed of Myb, Caf1-55, mip40, mip120, mip130, E2f2, Dp, Rbf, Rbf2, lin-52, HDAC1/Rpd3 and l(3)mbt.</text>
</comment>
<comment type="interaction">
    <interactant intactId="EBI-75953">
        <id>A1Z9E2</id>
    </interactant>
    <interactant intactId="EBI-302197">
        <id>Q94517</id>
        <label>HDAC1</label>
    </interactant>
    <organismsDiffer>false</organismsDiffer>
    <experiments>2</experiments>
</comment>
<comment type="subcellular location">
    <subcellularLocation>
        <location evidence="9">Nucleus</location>
    </subcellularLocation>
</comment>
<comment type="alternative products">
    <event type="alternative splicing"/>
    <isoform>
        <id>A1Z9E2-1</id>
        <name>1</name>
        <sequence type="displayed"/>
    </isoform>
    <isoform>
        <id>A1Z9E2-2</id>
        <name>2</name>
        <sequence type="described" ref="VSP_034282 VSP_034283 VSP_034284"/>
    </isoform>
</comment>
<comment type="similarity">
    <text evidence="9">Belongs to the lin-54 family.</text>
</comment>
<dbReference type="EMBL" id="AE013599">
    <property type="protein sequence ID" value="AAF58365.1"/>
    <property type="molecule type" value="Genomic_DNA"/>
</dbReference>
<dbReference type="EMBL" id="BT021272">
    <property type="protein sequence ID" value="AAX33420.1"/>
    <property type="molecule type" value="mRNA"/>
</dbReference>
<dbReference type="RefSeq" id="NP_610879.1">
    <molecule id="A1Z9E2-1"/>
    <property type="nucleotide sequence ID" value="NM_137035.2"/>
</dbReference>
<dbReference type="SMR" id="A1Z9E2"/>
<dbReference type="BioGRID" id="62258">
    <property type="interactions" value="24"/>
</dbReference>
<dbReference type="ComplexPortal" id="CPX-2374">
    <property type="entry name" value="drEAM transcriptional repressor complex, Rbf variant"/>
</dbReference>
<dbReference type="ComplexPortal" id="CPX-2376">
    <property type="entry name" value="drEAM transcriptional repressor complex, Rbf2 variant"/>
</dbReference>
<dbReference type="ComplexPortal" id="CPX-2378">
    <property type="entry name" value="Myb-MuvB transcriptional activation complex"/>
</dbReference>
<dbReference type="DIP" id="DIP-61918N"/>
<dbReference type="FunCoup" id="A1Z9E2">
    <property type="interactions" value="1727"/>
</dbReference>
<dbReference type="IntAct" id="A1Z9E2">
    <property type="interactions" value="20"/>
</dbReference>
<dbReference type="STRING" id="7227.FBpp0290602"/>
<dbReference type="GlyGen" id="A1Z9E2">
    <property type="glycosylation" value="4 sites"/>
</dbReference>
<dbReference type="PaxDb" id="7227-FBpp0290602"/>
<dbReference type="EnsemblMetazoa" id="FBtr0087669">
    <molecule id="A1Z9E2-1"/>
    <property type="protein sequence ID" value="FBpp0086789"/>
    <property type="gene ID" value="FBgn0033846"/>
</dbReference>
<dbReference type="GeneID" id="36499"/>
<dbReference type="KEGG" id="dme:Dmel_CG6061"/>
<dbReference type="AGR" id="FB:FBgn0033846"/>
<dbReference type="CTD" id="36499"/>
<dbReference type="FlyBase" id="FBgn0033846">
    <property type="gene designation" value="mip120"/>
</dbReference>
<dbReference type="VEuPathDB" id="VectorBase:FBgn0033846"/>
<dbReference type="eggNOG" id="KOG1171">
    <property type="taxonomic scope" value="Eukaryota"/>
</dbReference>
<dbReference type="InParanoid" id="A1Z9E2"/>
<dbReference type="OrthoDB" id="6283463at2759"/>
<dbReference type="PhylomeDB" id="A1Z9E2"/>
<dbReference type="Reactome" id="R-DME-1538133">
    <property type="pathway name" value="G0 and Early G1"/>
</dbReference>
<dbReference type="BioGRID-ORCS" id="36499">
    <property type="hits" value="0 hits in 3 CRISPR screens"/>
</dbReference>
<dbReference type="ChiTaRS" id="mip120">
    <property type="organism name" value="fly"/>
</dbReference>
<dbReference type="GenomeRNAi" id="36499"/>
<dbReference type="PRO" id="PR:A1Z9E2"/>
<dbReference type="Proteomes" id="UP000000803">
    <property type="component" value="Chromosome 2R"/>
</dbReference>
<dbReference type="Bgee" id="FBgn0033846">
    <property type="expression patterns" value="Expressed in egg chamber and 62 other cell types or tissues"/>
</dbReference>
<dbReference type="ExpressionAtlas" id="A1Z9E2">
    <property type="expression patterns" value="baseline and differential"/>
</dbReference>
<dbReference type="GO" id="GO:0000785">
    <property type="term" value="C:chromatin"/>
    <property type="evidence" value="ECO:0000314"/>
    <property type="project" value="FlyBase"/>
</dbReference>
<dbReference type="GO" id="GO:0070176">
    <property type="term" value="C:DRM complex"/>
    <property type="evidence" value="ECO:0000314"/>
    <property type="project" value="FlyBase"/>
</dbReference>
<dbReference type="GO" id="GO:0031523">
    <property type="term" value="C:Myb complex"/>
    <property type="evidence" value="ECO:0000314"/>
    <property type="project" value="FlyBase"/>
</dbReference>
<dbReference type="GO" id="GO:0005634">
    <property type="term" value="C:nucleus"/>
    <property type="evidence" value="ECO:0000314"/>
    <property type="project" value="FlyBase"/>
</dbReference>
<dbReference type="GO" id="GO:0003677">
    <property type="term" value="F:DNA binding"/>
    <property type="evidence" value="ECO:0000314"/>
    <property type="project" value="FlyBase"/>
</dbReference>
<dbReference type="GO" id="GO:0007307">
    <property type="term" value="P:eggshell chorion gene amplification"/>
    <property type="evidence" value="ECO:0000305"/>
    <property type="project" value="FlyBase"/>
</dbReference>
<dbReference type="GO" id="GO:0000122">
    <property type="term" value="P:negative regulation of transcription by RNA polymerase II"/>
    <property type="evidence" value="ECO:0000315"/>
    <property type="project" value="FlyBase"/>
</dbReference>
<dbReference type="GO" id="GO:0048477">
    <property type="term" value="P:oogenesis"/>
    <property type="evidence" value="ECO:0000315"/>
    <property type="project" value="FlyBase"/>
</dbReference>
<dbReference type="GO" id="GO:0006355">
    <property type="term" value="P:regulation of DNA-templated transcription"/>
    <property type="evidence" value="ECO:0000318"/>
    <property type="project" value="GO_Central"/>
</dbReference>
<dbReference type="GO" id="GO:0007283">
    <property type="term" value="P:spermatogenesis"/>
    <property type="evidence" value="ECO:0000315"/>
    <property type="project" value="FlyBase"/>
</dbReference>
<dbReference type="InterPro" id="IPR005172">
    <property type="entry name" value="CRC"/>
</dbReference>
<dbReference type="InterPro" id="IPR028307">
    <property type="entry name" value="Lin-54_fam"/>
</dbReference>
<dbReference type="InterPro" id="IPR033467">
    <property type="entry name" value="Tesmin/TSO1-like_CXC"/>
</dbReference>
<dbReference type="PANTHER" id="PTHR12446:SF34">
    <property type="entry name" value="PROTEIN LIN-54 HOMOLOG"/>
    <property type="match status" value="1"/>
</dbReference>
<dbReference type="PANTHER" id="PTHR12446">
    <property type="entry name" value="TESMIN/TSO1-RELATED"/>
    <property type="match status" value="1"/>
</dbReference>
<dbReference type="Pfam" id="PF03638">
    <property type="entry name" value="TCR"/>
    <property type="match status" value="2"/>
</dbReference>
<dbReference type="SMART" id="SM01114">
    <property type="entry name" value="CXC"/>
    <property type="match status" value="2"/>
</dbReference>
<dbReference type="PROSITE" id="PS51634">
    <property type="entry name" value="CRC"/>
    <property type="match status" value="1"/>
</dbReference>
<organism>
    <name type="scientific">Drosophila melanogaster</name>
    <name type="common">Fruit fly</name>
    <dbReference type="NCBI Taxonomy" id="7227"/>
    <lineage>
        <taxon>Eukaryota</taxon>
        <taxon>Metazoa</taxon>
        <taxon>Ecdysozoa</taxon>
        <taxon>Arthropoda</taxon>
        <taxon>Hexapoda</taxon>
        <taxon>Insecta</taxon>
        <taxon>Pterygota</taxon>
        <taxon>Neoptera</taxon>
        <taxon>Endopterygota</taxon>
        <taxon>Diptera</taxon>
        <taxon>Brachycera</taxon>
        <taxon>Muscomorpha</taxon>
        <taxon>Ephydroidea</taxon>
        <taxon>Drosophilidae</taxon>
        <taxon>Drosophila</taxon>
        <taxon>Sophophora</taxon>
    </lineage>
</organism>
<evidence type="ECO:0000255" key="1">
    <source>
        <dbReference type="PROSITE-ProRule" id="PRU00971"/>
    </source>
</evidence>
<evidence type="ECO:0000256" key="2">
    <source>
        <dbReference type="SAM" id="MobiDB-lite"/>
    </source>
</evidence>
<evidence type="ECO:0000269" key="3">
    <source>
    </source>
</evidence>
<evidence type="ECO:0000269" key="4">
    <source>
    </source>
</evidence>
<evidence type="ECO:0000269" key="5">
    <source>
    </source>
</evidence>
<evidence type="ECO:0000269" key="6">
    <source>
    </source>
</evidence>
<evidence type="ECO:0000269" key="7">
    <source>
    </source>
</evidence>
<evidence type="ECO:0000303" key="8">
    <source ref="3"/>
</evidence>
<evidence type="ECO:0000305" key="9"/>
<feature type="chain" id="PRO_0000341396" description="Protein lin-54 homolog">
    <location>
        <begin position="1"/>
        <end position="950"/>
    </location>
</feature>
<feature type="domain" description="CRC" evidence="1">
    <location>
        <begin position="737"/>
        <end position="849"/>
    </location>
</feature>
<feature type="region of interest" description="Disordered" evidence="2">
    <location>
        <begin position="1"/>
        <end position="63"/>
    </location>
</feature>
<feature type="region of interest" description="Disordered" evidence="2">
    <location>
        <begin position="366"/>
        <end position="387"/>
    </location>
</feature>
<feature type="region of interest" description="Disordered" evidence="2">
    <location>
        <begin position="500"/>
        <end position="523"/>
    </location>
</feature>
<feature type="region of interest" description="Disordered" evidence="2">
    <location>
        <begin position="533"/>
        <end position="552"/>
    </location>
</feature>
<feature type="region of interest" description="Disordered" evidence="2">
    <location>
        <begin position="638"/>
        <end position="702"/>
    </location>
</feature>
<feature type="compositionally biased region" description="Acidic residues" evidence="2">
    <location>
        <begin position="10"/>
        <end position="26"/>
    </location>
</feature>
<feature type="compositionally biased region" description="Basic and acidic residues" evidence="2">
    <location>
        <begin position="29"/>
        <end position="39"/>
    </location>
</feature>
<feature type="compositionally biased region" description="Acidic residues" evidence="2">
    <location>
        <begin position="40"/>
        <end position="55"/>
    </location>
</feature>
<feature type="compositionally biased region" description="Low complexity" evidence="2">
    <location>
        <begin position="366"/>
        <end position="386"/>
    </location>
</feature>
<feature type="compositionally biased region" description="Low complexity" evidence="2">
    <location>
        <begin position="500"/>
        <end position="516"/>
    </location>
</feature>
<feature type="compositionally biased region" description="Low complexity" evidence="2">
    <location>
        <begin position="535"/>
        <end position="548"/>
    </location>
</feature>
<feature type="compositionally biased region" description="Low complexity" evidence="2">
    <location>
        <begin position="661"/>
        <end position="682"/>
    </location>
</feature>
<feature type="splice variant" id="VSP_034282" description="In isoform 2." evidence="8">
    <original>MDTSGGNL</original>
    <variation>MSTYRVDYLT</variation>
    <location>
        <begin position="1"/>
        <end position="8"/>
    </location>
</feature>
<feature type="splice variant" id="VSP_034283" description="In isoform 2." evidence="8">
    <original>SASVSSEASDSSDAGPEAKKPRYV</original>
    <variation>KAALRYYHAARITEGSFPASSETN</variation>
    <location>
        <begin position="535"/>
        <end position="558"/>
    </location>
</feature>
<feature type="splice variant" id="VSP_034284" description="In isoform 2." evidence="8">
    <location>
        <begin position="559"/>
        <end position="950"/>
    </location>
</feature>
<keyword id="KW-0010">Activator</keyword>
<keyword id="KW-0025">Alternative splicing</keyword>
<keyword id="KW-0131">Cell cycle</keyword>
<keyword id="KW-0238">DNA-binding</keyword>
<keyword id="KW-0539">Nucleus</keyword>
<keyword id="KW-1185">Reference proteome</keyword>
<keyword id="KW-0678">Repressor</keyword>
<keyword id="KW-0804">Transcription</keyword>
<keyword id="KW-0805">Transcription regulation</keyword>
<accession>A1Z9E2</accession>
<accession>Q5BIF2</accession>
<proteinExistence type="evidence at protein level"/>
<gene>
    <name type="primary">mip120</name>
    <name type="ORF">CG6061</name>
</gene>
<protein>
    <recommendedName>
        <fullName>Protein lin-54 homolog</fullName>
    </recommendedName>
    <alternativeName>
        <fullName>Myb complex protein of 120 kDa</fullName>
    </alternativeName>
</protein>
<reference key="1">
    <citation type="journal article" date="2000" name="Science">
        <title>The genome sequence of Drosophila melanogaster.</title>
        <authorList>
            <person name="Adams M.D."/>
            <person name="Celniker S.E."/>
            <person name="Holt R.A."/>
            <person name="Evans C.A."/>
            <person name="Gocayne J.D."/>
            <person name="Amanatides P.G."/>
            <person name="Scherer S.E."/>
            <person name="Li P.W."/>
            <person name="Hoskins R.A."/>
            <person name="Galle R.F."/>
            <person name="George R.A."/>
            <person name="Lewis S.E."/>
            <person name="Richards S."/>
            <person name="Ashburner M."/>
            <person name="Henderson S.N."/>
            <person name="Sutton G.G."/>
            <person name="Wortman J.R."/>
            <person name="Yandell M.D."/>
            <person name="Zhang Q."/>
            <person name="Chen L.X."/>
            <person name="Brandon R.C."/>
            <person name="Rogers Y.-H.C."/>
            <person name="Blazej R.G."/>
            <person name="Champe M."/>
            <person name="Pfeiffer B.D."/>
            <person name="Wan K.H."/>
            <person name="Doyle C."/>
            <person name="Baxter E.G."/>
            <person name="Helt G."/>
            <person name="Nelson C.R."/>
            <person name="Miklos G.L.G."/>
            <person name="Abril J.F."/>
            <person name="Agbayani A."/>
            <person name="An H.-J."/>
            <person name="Andrews-Pfannkoch C."/>
            <person name="Baldwin D."/>
            <person name="Ballew R.M."/>
            <person name="Basu A."/>
            <person name="Baxendale J."/>
            <person name="Bayraktaroglu L."/>
            <person name="Beasley E.M."/>
            <person name="Beeson K.Y."/>
            <person name="Benos P.V."/>
            <person name="Berman B.P."/>
            <person name="Bhandari D."/>
            <person name="Bolshakov S."/>
            <person name="Borkova D."/>
            <person name="Botchan M.R."/>
            <person name="Bouck J."/>
            <person name="Brokstein P."/>
            <person name="Brottier P."/>
            <person name="Burtis K.C."/>
            <person name="Busam D.A."/>
            <person name="Butler H."/>
            <person name="Cadieu E."/>
            <person name="Center A."/>
            <person name="Chandra I."/>
            <person name="Cherry J.M."/>
            <person name="Cawley S."/>
            <person name="Dahlke C."/>
            <person name="Davenport L.B."/>
            <person name="Davies P."/>
            <person name="de Pablos B."/>
            <person name="Delcher A."/>
            <person name="Deng Z."/>
            <person name="Mays A.D."/>
            <person name="Dew I."/>
            <person name="Dietz S.M."/>
            <person name="Dodson K."/>
            <person name="Doup L.E."/>
            <person name="Downes M."/>
            <person name="Dugan-Rocha S."/>
            <person name="Dunkov B.C."/>
            <person name="Dunn P."/>
            <person name="Durbin K.J."/>
            <person name="Evangelista C.C."/>
            <person name="Ferraz C."/>
            <person name="Ferriera S."/>
            <person name="Fleischmann W."/>
            <person name="Fosler C."/>
            <person name="Gabrielian A.E."/>
            <person name="Garg N.S."/>
            <person name="Gelbart W.M."/>
            <person name="Glasser K."/>
            <person name="Glodek A."/>
            <person name="Gong F."/>
            <person name="Gorrell J.H."/>
            <person name="Gu Z."/>
            <person name="Guan P."/>
            <person name="Harris M."/>
            <person name="Harris N.L."/>
            <person name="Harvey D.A."/>
            <person name="Heiman T.J."/>
            <person name="Hernandez J.R."/>
            <person name="Houck J."/>
            <person name="Hostin D."/>
            <person name="Houston K.A."/>
            <person name="Howland T.J."/>
            <person name="Wei M.-H."/>
            <person name="Ibegwam C."/>
            <person name="Jalali M."/>
            <person name="Kalush F."/>
            <person name="Karpen G.H."/>
            <person name="Ke Z."/>
            <person name="Kennison J.A."/>
            <person name="Ketchum K.A."/>
            <person name="Kimmel B.E."/>
            <person name="Kodira C.D."/>
            <person name="Kraft C.L."/>
            <person name="Kravitz S."/>
            <person name="Kulp D."/>
            <person name="Lai Z."/>
            <person name="Lasko P."/>
            <person name="Lei Y."/>
            <person name="Levitsky A.A."/>
            <person name="Li J.H."/>
            <person name="Li Z."/>
            <person name="Liang Y."/>
            <person name="Lin X."/>
            <person name="Liu X."/>
            <person name="Mattei B."/>
            <person name="McIntosh T.C."/>
            <person name="McLeod M.P."/>
            <person name="McPherson D."/>
            <person name="Merkulov G."/>
            <person name="Milshina N.V."/>
            <person name="Mobarry C."/>
            <person name="Morris J."/>
            <person name="Moshrefi A."/>
            <person name="Mount S.M."/>
            <person name="Moy M."/>
            <person name="Murphy B."/>
            <person name="Murphy L."/>
            <person name="Muzny D.M."/>
            <person name="Nelson D.L."/>
            <person name="Nelson D.R."/>
            <person name="Nelson K.A."/>
            <person name="Nixon K."/>
            <person name="Nusskern D.R."/>
            <person name="Pacleb J.M."/>
            <person name="Palazzolo M."/>
            <person name="Pittman G.S."/>
            <person name="Pan S."/>
            <person name="Pollard J."/>
            <person name="Puri V."/>
            <person name="Reese M.G."/>
            <person name="Reinert K."/>
            <person name="Remington K."/>
            <person name="Saunders R.D.C."/>
            <person name="Scheeler F."/>
            <person name="Shen H."/>
            <person name="Shue B.C."/>
            <person name="Siden-Kiamos I."/>
            <person name="Simpson M."/>
            <person name="Skupski M.P."/>
            <person name="Smith T.J."/>
            <person name="Spier E."/>
            <person name="Spradling A.C."/>
            <person name="Stapleton M."/>
            <person name="Strong R."/>
            <person name="Sun E."/>
            <person name="Svirskas R."/>
            <person name="Tector C."/>
            <person name="Turner R."/>
            <person name="Venter E."/>
            <person name="Wang A.H."/>
            <person name="Wang X."/>
            <person name="Wang Z.-Y."/>
            <person name="Wassarman D.A."/>
            <person name="Weinstock G.M."/>
            <person name="Weissenbach J."/>
            <person name="Williams S.M."/>
            <person name="Woodage T."/>
            <person name="Worley K.C."/>
            <person name="Wu D."/>
            <person name="Yang S."/>
            <person name="Yao Q.A."/>
            <person name="Ye J."/>
            <person name="Yeh R.-F."/>
            <person name="Zaveri J.S."/>
            <person name="Zhan M."/>
            <person name="Zhang G."/>
            <person name="Zhao Q."/>
            <person name="Zheng L."/>
            <person name="Zheng X.H."/>
            <person name="Zhong F.N."/>
            <person name="Zhong W."/>
            <person name="Zhou X."/>
            <person name="Zhu S.C."/>
            <person name="Zhu X."/>
            <person name="Smith H.O."/>
            <person name="Gibbs R.A."/>
            <person name="Myers E.W."/>
            <person name="Rubin G.M."/>
            <person name="Venter J.C."/>
        </authorList>
    </citation>
    <scope>NUCLEOTIDE SEQUENCE [LARGE SCALE GENOMIC DNA]</scope>
    <source>
        <strain>Berkeley</strain>
    </source>
</reference>
<reference key="2">
    <citation type="journal article" date="2002" name="Genome Biol.">
        <title>Annotation of the Drosophila melanogaster euchromatic genome: a systematic review.</title>
        <authorList>
            <person name="Misra S."/>
            <person name="Crosby M.A."/>
            <person name="Mungall C.J."/>
            <person name="Matthews B.B."/>
            <person name="Campbell K.S."/>
            <person name="Hradecky P."/>
            <person name="Huang Y."/>
            <person name="Kaminker J.S."/>
            <person name="Millburn G.H."/>
            <person name="Prochnik S.E."/>
            <person name="Smith C.D."/>
            <person name="Tupy J.L."/>
            <person name="Whitfield E.J."/>
            <person name="Bayraktaroglu L."/>
            <person name="Berman B.P."/>
            <person name="Bettencourt B.R."/>
            <person name="Celniker S.E."/>
            <person name="de Grey A.D.N.J."/>
            <person name="Drysdale R.A."/>
            <person name="Harris N.L."/>
            <person name="Richter J."/>
            <person name="Russo S."/>
            <person name="Schroeder A.J."/>
            <person name="Shu S.Q."/>
            <person name="Stapleton M."/>
            <person name="Yamada C."/>
            <person name="Ashburner M."/>
            <person name="Gelbart W.M."/>
            <person name="Rubin G.M."/>
            <person name="Lewis S.E."/>
        </authorList>
    </citation>
    <scope>GENOME REANNOTATION</scope>
    <source>
        <strain>Berkeley</strain>
    </source>
</reference>
<reference key="3">
    <citation type="submission" date="2005-03" db="EMBL/GenBank/DDBJ databases">
        <authorList>
            <person name="Stapleton M."/>
            <person name="Carlson J.W."/>
            <person name="Chavez C."/>
            <person name="Frise E."/>
            <person name="George R.A."/>
            <person name="Pacleb J.M."/>
            <person name="Park S."/>
            <person name="Wan K.H."/>
            <person name="Yu C."/>
            <person name="Rubin G.M."/>
            <person name="Celniker S.E."/>
        </authorList>
    </citation>
    <scope>NUCLEOTIDE SEQUENCE [LARGE SCALE MRNA] (ISOFORM 2)</scope>
    <source>
        <strain>Berkeley</strain>
        <tissue>Embryo</tissue>
    </source>
</reference>
<reference key="4">
    <citation type="journal article" date="2002" name="Nature">
        <title>Role for a Drosophila Myb-containing protein complex in site-specific DNA replication.</title>
        <authorList>
            <person name="Beall E.L."/>
            <person name="Manak J.R."/>
            <person name="Zhou S."/>
            <person name="Bell M."/>
            <person name="Lipsick J.S."/>
            <person name="Botchan M.R."/>
        </authorList>
    </citation>
    <scope>FUNCTION</scope>
    <scope>IDENTIFICATION BY MASS SPECTROMETRY</scope>
    <scope>IDENTIFICATION IN THE DREAM COMPLEX</scope>
</reference>
<reference key="5">
    <citation type="journal article" date="2004" name="Cell">
        <title>Native E2F/RBF complexes contain Myb-interacting proteins and repress transcription of developmentally controlled E2F target genes.</title>
        <authorList>
            <person name="Korenjak M."/>
            <person name="Taylor-Harding B."/>
            <person name="Binne U.K."/>
            <person name="Satterlee J.S."/>
            <person name="Stevaux O."/>
            <person name="Aasland R."/>
            <person name="White-Cooper H."/>
            <person name="Dyson N."/>
            <person name="Brehm A."/>
        </authorList>
    </citation>
    <scope>FUNCTION</scope>
    <scope>IDENTIFICATION IN THE DREAM COMPLEX</scope>
</reference>
<reference key="6">
    <citation type="journal article" date="2004" name="Genes Dev.">
        <title>Dm-myb mutant lethality in Drosophila is dependent upon mip130: positive and negative regulation of DNA replication.</title>
        <authorList>
            <person name="Beall E.L."/>
            <person name="Bell M."/>
            <person name="Georlette D."/>
            <person name="Botchan M.R."/>
        </authorList>
    </citation>
    <scope>FUNCTION</scope>
</reference>
<reference key="7">
    <citation type="journal article" date="2004" name="Genes Dev.">
        <title>Identification of a Drosophila Myb-E2F2/RBF transcriptional repressor complex.</title>
        <authorList>
            <person name="Lewis P.W."/>
            <person name="Beall E.L."/>
            <person name="Fleischer T.C."/>
            <person name="Georlette D."/>
            <person name="Link A.J."/>
            <person name="Botchan M.R."/>
        </authorList>
    </citation>
    <scope>IDENTIFICATION IN THE DREAM COMPLEX</scope>
</reference>
<reference key="8">
    <citation type="journal article" date="2008" name="Genes Dev.">
        <title>Epigenetic regulation of gene expression by Drosophila Myb and E2F2-RBF via the Myb-MuvB/dREAM complex.</title>
        <authorList>
            <person name="Wen H."/>
            <person name="Andrejka L."/>
            <person name="Ashton J."/>
            <person name="Karess R."/>
            <person name="Lipsick J.S."/>
        </authorList>
    </citation>
    <scope>FUNCTION</scope>
</reference>
<name>LIN54_DROME</name>
<sequence length="950" mass="100022">MDTSGGNLDSLDDTEPLPELSFEDFLEPTSEKSSQHMEIEALDSEEDNIGGEDLADPANDSLNTPQFKKNVVHILEDKRLNSSGLTVLKSHAIKMVTAGGTPPAKAQVTDVKILNKLKPIPSSTLKIGSTTIATKSTPGSITKTLGNLTQIRTKDGQVIFVQKSVPGTQSSTAVTGSPSGGIRRLVAPSGIQKAVLSKGVTMASTGLVKAAVPAKASTSVPGSAITLKGIQPLAGGTAKASTSSTTATTSPSLAQPNKIQVVRTADGKIIKINQAGPSLLVNAKQGTGTTVTPGGSAATSVKLSPSTGNVVLNKPVGQVVVRTETPVKTATGSVASASATPGKMLVQSGGKQILVSNKNIIKLSPNASATSSTTHTTGGQTPSTSSGLHAIQLPGKGGIQYVRVLNNNKSAAGTSATASIPKTVQTQKITVVRPPAATGVPATSTTTSAAAASPAAASKANLAMGNTNKIVMRSMGGSIVPLPSVQTLVSKRALGAISNASKPASAASSSATPSASQELPRKHRLTDLNVQLKQSASVSSEASDSSDAGPEAKKPRYVITMQQGSQKAASQPVQKLINRTANVQRVVSSSTSPSSNSTKKIYNYVQPTGSNGAKYMICNSGVPQSSTSAMRRGYTGYVENKTRRPPPISPQQHRFKQMGPQQQSKHQQLQAQAKQRIRQQQLPTEQSTPIKVEPKLPTLPPGVKANVPAKPLFEVLKPPATAAAAGAVDPLGGMTSRRKHCNCSKSQCLKLYCDCFANGEFCQDCTCKDCFNNLDYEVERERAIRSCLDRNPSAFKPKITAPNSGDMRLHNKGCNCKRSGCLKNYCECYEAKIPCSSICKCVGCRNMEDRPDVDMDSLDGLMGVEGQKKDKAKNKQLNENRANIYFTDDVIEATIMCMISRIVMHEKQNVAVEDMEREVMEEMGESLTQIIAFAKEKQETSQIDESKPSS</sequence>